<name>CASTO_LOTJA</name>
<proteinExistence type="evidence at protein level"/>
<dbReference type="EMBL" id="AB162157">
    <property type="protein sequence ID" value="BAD89021.1"/>
    <property type="molecule type" value="mRNA"/>
</dbReference>
<dbReference type="EMBL" id="AB162016">
    <property type="protein sequence ID" value="BAD89019.1"/>
    <property type="molecule type" value="Genomic_DNA"/>
</dbReference>
<dbReference type="PDB" id="6O6J">
    <property type="method" value="X-ray"/>
    <property type="resolution" value="1.60 A"/>
    <property type="chains" value="A=312-853"/>
</dbReference>
<dbReference type="PDB" id="6O7A">
    <property type="method" value="X-ray"/>
    <property type="resolution" value="3.30 A"/>
    <property type="chains" value="A/B/C/D=312-853"/>
</dbReference>
<dbReference type="PDB" id="6O7C">
    <property type="method" value="X-ray"/>
    <property type="resolution" value="1.85 A"/>
    <property type="chains" value="A=312-853"/>
</dbReference>
<dbReference type="PDBsum" id="6O6J"/>
<dbReference type="PDBsum" id="6O7A"/>
<dbReference type="PDBsum" id="6O7C"/>
<dbReference type="SMR" id="Q5H8A6"/>
<dbReference type="TCDB" id="1.A.1.23.2">
    <property type="family name" value="the voltage-gated ion channel (vic) superfamily"/>
</dbReference>
<dbReference type="OMA" id="VPEMDRE"/>
<dbReference type="OrthoDB" id="414047at2759"/>
<dbReference type="GO" id="GO:0031965">
    <property type="term" value="C:nuclear membrane"/>
    <property type="evidence" value="ECO:0007669"/>
    <property type="project" value="UniProtKB-SubCell"/>
</dbReference>
<dbReference type="GO" id="GO:0034220">
    <property type="term" value="P:monoatomic ion transmembrane transport"/>
    <property type="evidence" value="ECO:0007669"/>
    <property type="project" value="UniProtKB-KW"/>
</dbReference>
<dbReference type="Gene3D" id="3.40.50.720">
    <property type="entry name" value="NAD(P)-binding Rossmann-like Domain"/>
    <property type="match status" value="1"/>
</dbReference>
<dbReference type="InterPro" id="IPR044849">
    <property type="entry name" value="CASTOR/POLLUX/SYM8-like"/>
</dbReference>
<dbReference type="InterPro" id="IPR010420">
    <property type="entry name" value="CASTOR/POLLUX/SYM8_dom"/>
</dbReference>
<dbReference type="InterPro" id="IPR003148">
    <property type="entry name" value="RCK_N"/>
</dbReference>
<dbReference type="PANTHER" id="PTHR31563:SF1">
    <property type="entry name" value="ION CHANNEL CASTOR-RELATED"/>
    <property type="match status" value="1"/>
</dbReference>
<dbReference type="PANTHER" id="PTHR31563">
    <property type="entry name" value="ION CHANNEL POLLUX-RELATED"/>
    <property type="match status" value="1"/>
</dbReference>
<dbReference type="Pfam" id="PF06241">
    <property type="entry name" value="Castor_Poll_mid"/>
    <property type="match status" value="1"/>
</dbReference>
<dbReference type="SUPFAM" id="SSF81324">
    <property type="entry name" value="Voltage-gated potassium channels"/>
    <property type="match status" value="1"/>
</dbReference>
<dbReference type="PROSITE" id="PS51201">
    <property type="entry name" value="RCK_N"/>
    <property type="match status" value="2"/>
</dbReference>
<gene>
    <name type="primary">CASTOR</name>
</gene>
<reference key="1">
    <citation type="journal article" date="2005" name="Nature">
        <title>Plastid proteins crucial for symbiotic fungal and bacterial entry into plant roots.</title>
        <authorList>
            <person name="Imaizumi-Anraku H."/>
            <person name="Takeda N."/>
            <person name="Charpentier M."/>
            <person name="Perry J."/>
            <person name="Miwa H."/>
            <person name="Umehara Y."/>
            <person name="Kouchi H."/>
            <person name="Murakami Y."/>
            <person name="Mulder L."/>
            <person name="Vickers K."/>
            <person name="Pike J."/>
            <person name="Downie J.A."/>
            <person name="Wang T."/>
            <person name="Sato S."/>
            <person name="Asamizu E."/>
            <person name="Tabata S."/>
            <person name="Yoshikawa M."/>
            <person name="Murooka Y."/>
            <person name="Wu G.-J."/>
            <person name="Kawaguchi M."/>
            <person name="Kawasaki S."/>
            <person name="Parniske M."/>
            <person name="Hayashi M."/>
        </authorList>
    </citation>
    <scope>NUCLEOTIDE SEQUENCE [GENOMIC DNA / MRNA]</scope>
    <scope>TISSUE SPECIFICITY</scope>
    <scope>SUBCELLULAR LOCATION</scope>
    <scope>INDUCTION</scope>
    <scope>MUTAGENESIS OF THR-249; ALA-264; GLY-383; ASP-444; ARG-590; VAL-598; PRO-698; ALA-760 AND 846-PHE-VAL-847</scope>
    <source>
        <strain>cv. Gifu / B-129</strain>
    </source>
</reference>
<reference key="2">
    <citation type="journal article" date="2006" name="Mol. Plant Microbe Interact.">
        <title>Analysis of Nod-factor-induced calcium signaling in root hairs of symbiotically defective mutants of Lotus japonicus.</title>
        <authorList>
            <person name="Miwa H."/>
            <person name="Sun J."/>
            <person name="Oldroyd G.E."/>
            <person name="Downie J.A."/>
        </authorList>
    </citation>
    <scope>FUNCTION</scope>
</reference>
<reference key="3">
    <citation type="journal article" date="2008" name="Plant Cell">
        <title>Lotus japonicus CASTOR and POLLUX are ion channels essential for perinuclear calcium spiking in legume root endosymbiosis.</title>
        <authorList>
            <person name="Charpentier M."/>
            <person name="Bredemeier R."/>
            <person name="Wanner G."/>
            <person name="Takeda N."/>
            <person name="Schleiff E."/>
            <person name="Parniske M."/>
        </authorList>
    </citation>
    <scope>FUNCTION</scope>
    <scope>SUBUNIT</scope>
    <scope>MUTAGENESIS OF ALA-264 AND 479-LEU-ALA-480</scope>
    <scope>TISSUE SPECIFICITY</scope>
    <scope>SUBCELLULAR LOCATION</scope>
</reference>
<organism>
    <name type="scientific">Lotus japonicus</name>
    <name type="common">Lotus corniculatus var. japonicus</name>
    <dbReference type="NCBI Taxonomy" id="34305"/>
    <lineage>
        <taxon>Eukaryota</taxon>
        <taxon>Viridiplantae</taxon>
        <taxon>Streptophyta</taxon>
        <taxon>Embryophyta</taxon>
        <taxon>Tracheophyta</taxon>
        <taxon>Spermatophyta</taxon>
        <taxon>Magnoliopsida</taxon>
        <taxon>eudicotyledons</taxon>
        <taxon>Gunneridae</taxon>
        <taxon>Pentapetalae</taxon>
        <taxon>rosids</taxon>
        <taxon>fabids</taxon>
        <taxon>Fabales</taxon>
        <taxon>Fabaceae</taxon>
        <taxon>Papilionoideae</taxon>
        <taxon>50 kb inversion clade</taxon>
        <taxon>NPAAA clade</taxon>
        <taxon>Hologalegina</taxon>
        <taxon>robinioid clade</taxon>
        <taxon>Loteae</taxon>
        <taxon>Lotus</taxon>
    </lineage>
</organism>
<sequence>MSLDSEVSVSSSSGRDWFFPSPSFFRSSPSQYGRRFHTNSNTHSAPSSTYPSGIRHRRRVKFSRTPTTSSNEKPQISIVSDKPSAISKNNLNWLSQFGLQFALVTLTIVFLLLLLLRNTHLESQVNKLQGEILRLHACHQLDTLNVSSSTAHKSQDTHPCSCENFKRNLALFLSFMLLLIPLIIFKYIDYVSRSRLSENISEQVSLNKQIAYRVDVFLSVYPYAKPLVLLVATLLLIFLGGLTLFGVTTEDLGHCLWLSWTYVADSGNHASSEGIGPRLVAVSISFGGMLIFAMMLGLVSDAISEKFDSLRKGKSEVVEQNHTLILGWSDKLGSLLNQLAIANESLGGGTIAVMAERDKEDMELDIGKMEFDFKGTSVICRSGSPLILADLKKVSVSKARTIIVLAEDGNADQSDARALRTVLSLTGVKEGLRGHIVVEMSDLDNEVLVKLVGGDLVETVVAHDVIGRLMIQCARQPGLAQIWEDILGFENCEFYIKRWPQLDGMLFEDVLISFPAAIPCGIKVASYGGKIILNPDDSYVLQEGDEVLVIAEDDDTYAPAPLPMVRRGSLPKDFVYPKSPERILFCGWRRDMEDMITVLDASLAPDSELWMFNDVPEKEREKKLIDGGLDISRLENISLVNREGNAVIRRHLESLPLESFDSILILADESVEDSAIQADSRSLATLLLIRDIQARRLPYVAMASQTQGGNFSKGSWIGEMKQASDKTVIISEILDPRTKNLLSMSKISDYVLSNELVSMALAMVAEDRQINDVLEELFAEEGNEMHIRQADIYLREGEEMSFYEIMLRARQRREILIGYRLANAERAVINPPAKTGRRKWSLKDVFVVITEKE</sequence>
<accession>Q5H8A6</accession>
<protein>
    <recommendedName>
        <fullName>Ion channel CASTOR</fullName>
    </recommendedName>
</protein>
<comment type="function">
    <text evidence="5 6">Ion channel with a moderate preference for potassium over sodium and calcium. Involved in perinuclear calcium spiking but not in cytosolic calcium influx. Closed at negative voltages in presence of magnesium. Required for early signal transduction events leading to endosymbiosis. Acts early in a signal transduction chain leading from the perception of Nod factor to the activation of calcium spiking. Also involved in fungal entry into root epidermal cells during the establishment of the arbuscular mycorrhizal symbiosis.</text>
</comment>
<comment type="subunit">
    <text evidence="6">Homooligomer.</text>
</comment>
<comment type="subcellular location">
    <subcellularLocation>
        <location evidence="4 6">Nucleus membrane</location>
        <topology evidence="4 6">Multi-pass membrane protein</topology>
    </subcellularLocation>
    <text>The chloroplastic localization proposed by PubMed:15616514 is probably an overexpression artifact.</text>
</comment>
<comment type="tissue specificity">
    <text evidence="4 6">Expressed in infected and uninfected roots, leaves, seed pods, and flower buds.</text>
</comment>
<comment type="induction">
    <text evidence="4">Slightly repressed during the first 2 days after bacterial or Nod factor treatment.</text>
</comment>
<comment type="similarity">
    <text evidence="7">Belongs to the castor/pollux (TC 1.A.1.23) family.</text>
</comment>
<evidence type="ECO:0000255" key="1"/>
<evidence type="ECO:0000255" key="2">
    <source>
        <dbReference type="PROSITE-ProRule" id="PRU00543"/>
    </source>
</evidence>
<evidence type="ECO:0000256" key="3">
    <source>
        <dbReference type="SAM" id="MobiDB-lite"/>
    </source>
</evidence>
<evidence type="ECO:0000269" key="4">
    <source>
    </source>
</evidence>
<evidence type="ECO:0000269" key="5">
    <source>
    </source>
</evidence>
<evidence type="ECO:0000269" key="6">
    <source>
    </source>
</evidence>
<evidence type="ECO:0000305" key="7"/>
<evidence type="ECO:0007829" key="8">
    <source>
        <dbReference type="PDB" id="6O6J"/>
    </source>
</evidence>
<evidence type="ECO:0007829" key="9">
    <source>
        <dbReference type="PDB" id="6O7A"/>
    </source>
</evidence>
<feature type="chain" id="PRO_0000004682" description="Ion channel CASTOR">
    <location>
        <begin position="1"/>
        <end position="853"/>
    </location>
</feature>
<feature type="transmembrane region" description="Helical" evidence="1">
    <location>
        <begin position="96"/>
        <end position="116"/>
    </location>
</feature>
<feature type="transmembrane region" description="Helical" evidence="1">
    <location>
        <begin position="168"/>
        <end position="188"/>
    </location>
</feature>
<feature type="transmembrane region" description="Helical" evidence="1">
    <location>
        <begin position="227"/>
        <end position="247"/>
    </location>
</feature>
<feature type="transmembrane region" description="Helical" evidence="1">
    <location>
        <begin position="279"/>
        <end position="299"/>
    </location>
</feature>
<feature type="domain" description="RCK N-terminal 1" evidence="2">
    <location>
        <begin position="320"/>
        <end position="461"/>
    </location>
</feature>
<feature type="domain" description="RCK N-terminal 2" evidence="2">
    <location>
        <begin position="580"/>
        <end position="752"/>
    </location>
</feature>
<feature type="region of interest" description="Disordered" evidence="3">
    <location>
        <begin position="1"/>
        <end position="55"/>
    </location>
</feature>
<feature type="coiled-coil region" evidence="1">
    <location>
        <begin position="117"/>
        <end position="137"/>
    </location>
</feature>
<feature type="compositionally biased region" description="Low complexity" evidence="3">
    <location>
        <begin position="1"/>
        <end position="30"/>
    </location>
</feature>
<feature type="compositionally biased region" description="Polar residues" evidence="3">
    <location>
        <begin position="38"/>
        <end position="51"/>
    </location>
</feature>
<feature type="mutagenesis site" description="In castor-15; no nodules formation or arbuscular mycorrhizal symbiosis." evidence="4">
    <original>T</original>
    <variation>I</variation>
    <location>
        <position position="249"/>
    </location>
</feature>
<feature type="mutagenesis site" description="In castor-2 / Ljsym4-2; altered selectivity of the pore resulting in a defective calcium spiking. No nodules formation or arbuscular mycorrhizal symbiosis." evidence="4 6">
    <original>A</original>
    <variation>T</variation>
    <location>
        <position position="264"/>
    </location>
</feature>
<feature type="mutagenesis site" description="In castor-3 / Ljsym22-1 and castor-16; no nodules formation or arbuscular mycorrhizal symbiosis." evidence="4">
    <original>G</original>
    <variation>E</variation>
    <location>
        <position position="383"/>
    </location>
</feature>
<feature type="mutagenesis site" description="In castor-13; no nodules formation or arbuscular mycorrhizal symbiosis." evidence="4">
    <original>D</original>
    <variation>N</variation>
    <location>
        <position position="444"/>
    </location>
</feature>
<feature type="mutagenesis site" description="In castor-1 / Ljsym4-1; loss of multimerization, no nodules formation or arbuscular mycorrhizal symbiosis." evidence="6">
    <location>
        <begin position="479"/>
        <end position="480"/>
    </location>
</feature>
<feature type="mutagenesis site" description="In castor-17; no nodules formation or arbuscular mycorrhizal symbiosis." evidence="4">
    <original>R</original>
    <variation>H</variation>
    <location>
        <position position="590"/>
    </location>
</feature>
<feature type="mutagenesis site" description="In castor-7; no nodules formation or arbuscular mycorrhizal symbiosis." evidence="4">
    <original>V</original>
    <variation>I</variation>
    <location>
        <position position="598"/>
    </location>
</feature>
<feature type="mutagenesis site" description="In castor-6; no nodules formation or arbuscular mycorrhizal symbiosis." evidence="4">
    <original>P</original>
    <variation>L</variation>
    <location>
        <position position="698"/>
    </location>
</feature>
<feature type="mutagenesis site" description="In castor-14; no nodules formation or arbuscular mycorrhizal symbiosis." evidence="4">
    <original>A</original>
    <variation>T</variation>
    <location>
        <position position="760"/>
    </location>
</feature>
<feature type="mutagenesis site" description="In castor-11; no nodules formation or arbuscular mycorrhizal symbiosis." evidence="4">
    <original>FV</original>
    <variation>LW</variation>
    <location>
        <begin position="846"/>
        <end position="847"/>
    </location>
</feature>
<feature type="mutagenesis site" description="In castor-11; no nodules formation or arbuscular mycorrhizal symbiosis.">
    <location>
        <begin position="848"/>
        <end position="853"/>
    </location>
</feature>
<feature type="strand" evidence="8">
    <location>
        <begin position="323"/>
        <end position="326"/>
    </location>
</feature>
<feature type="helix" evidence="8">
    <location>
        <begin position="332"/>
        <end position="343"/>
    </location>
</feature>
<feature type="helix" evidence="8">
    <location>
        <begin position="344"/>
        <end position="346"/>
    </location>
</feature>
<feature type="strand" evidence="8">
    <location>
        <begin position="350"/>
        <end position="357"/>
    </location>
</feature>
<feature type="helix" evidence="8">
    <location>
        <begin position="359"/>
        <end position="367"/>
    </location>
</feature>
<feature type="strand" evidence="8">
    <location>
        <begin position="377"/>
        <end position="382"/>
    </location>
</feature>
<feature type="helix" evidence="8">
    <location>
        <begin position="388"/>
        <end position="393"/>
    </location>
</feature>
<feature type="helix" evidence="8">
    <location>
        <begin position="396"/>
        <end position="398"/>
    </location>
</feature>
<feature type="strand" evidence="8">
    <location>
        <begin position="400"/>
        <end position="404"/>
    </location>
</feature>
<feature type="helix" evidence="8">
    <location>
        <begin position="411"/>
        <end position="426"/>
    </location>
</feature>
<feature type="strand" evidence="8">
    <location>
        <begin position="433"/>
        <end position="441"/>
    </location>
</feature>
<feature type="helix" evidence="8">
    <location>
        <begin position="443"/>
        <end position="445"/>
    </location>
</feature>
<feature type="helix" evidence="8">
    <location>
        <begin position="446"/>
        <end position="453"/>
    </location>
</feature>
<feature type="helix" evidence="8">
    <location>
        <begin position="454"/>
        <end position="456"/>
    </location>
</feature>
<feature type="strand" evidence="8">
    <location>
        <begin position="457"/>
        <end position="461"/>
    </location>
</feature>
<feature type="helix" evidence="8">
    <location>
        <begin position="462"/>
        <end position="475"/>
    </location>
</feature>
<feature type="helix" evidence="8">
    <location>
        <begin position="479"/>
        <end position="487"/>
    </location>
</feature>
<feature type="strand" evidence="8">
    <location>
        <begin position="488"/>
        <end position="491"/>
    </location>
</feature>
<feature type="strand" evidence="8">
    <location>
        <begin position="493"/>
        <end position="497"/>
    </location>
</feature>
<feature type="helix" evidence="8">
    <location>
        <begin position="500"/>
        <end position="502"/>
    </location>
</feature>
<feature type="helix" evidence="8">
    <location>
        <begin position="507"/>
        <end position="510"/>
    </location>
</feature>
<feature type="strand" evidence="8">
    <location>
        <begin position="517"/>
        <end position="523"/>
    </location>
</feature>
<feature type="helix" evidence="8">
    <location>
        <begin position="525"/>
        <end position="527"/>
    </location>
</feature>
<feature type="strand" evidence="8">
    <location>
        <begin position="531"/>
        <end position="534"/>
    </location>
</feature>
<feature type="strand" evidence="8">
    <location>
        <begin position="546"/>
        <end position="553"/>
    </location>
</feature>
<feature type="strand" evidence="8">
    <location>
        <begin position="582"/>
        <end position="587"/>
    </location>
</feature>
<feature type="helix" evidence="8">
    <location>
        <begin position="592"/>
        <end position="602"/>
    </location>
</feature>
<feature type="strand" evidence="8">
    <location>
        <begin position="607"/>
        <end position="615"/>
    </location>
</feature>
<feature type="helix" evidence="8">
    <location>
        <begin position="617"/>
        <end position="619"/>
    </location>
</feature>
<feature type="helix" evidence="8">
    <location>
        <begin position="620"/>
        <end position="626"/>
    </location>
</feature>
<feature type="helix" evidence="8">
    <location>
        <begin position="631"/>
        <end position="633"/>
    </location>
</feature>
<feature type="strand" evidence="8">
    <location>
        <begin position="635"/>
        <end position="643"/>
    </location>
</feature>
<feature type="strand" evidence="9">
    <location>
        <begin position="646"/>
        <end position="648"/>
    </location>
</feature>
<feature type="helix" evidence="8">
    <location>
        <begin position="649"/>
        <end position="653"/>
    </location>
</feature>
<feature type="helix" evidence="8">
    <location>
        <begin position="657"/>
        <end position="659"/>
    </location>
</feature>
<feature type="strand" evidence="8">
    <location>
        <begin position="661"/>
        <end position="665"/>
    </location>
</feature>
<feature type="turn" evidence="8">
    <location>
        <begin position="669"/>
        <end position="673"/>
    </location>
</feature>
<feature type="helix" evidence="8">
    <location>
        <begin position="675"/>
        <end position="695"/>
    </location>
</feature>
<feature type="strand" evidence="8">
    <location>
        <begin position="728"/>
        <end position="734"/>
    </location>
</feature>
<feature type="helix" evidence="8">
    <location>
        <begin position="736"/>
        <end position="741"/>
    </location>
</feature>
<feature type="turn" evidence="8">
    <location>
        <begin position="742"/>
        <end position="744"/>
    </location>
</feature>
<feature type="helix" evidence="8">
    <location>
        <begin position="746"/>
        <end position="750"/>
    </location>
</feature>
<feature type="strand" evidence="8">
    <location>
        <begin position="751"/>
        <end position="753"/>
    </location>
</feature>
<feature type="helix" evidence="8">
    <location>
        <begin position="755"/>
        <end position="766"/>
    </location>
</feature>
<feature type="helix" evidence="8">
    <location>
        <begin position="770"/>
        <end position="778"/>
    </location>
</feature>
<feature type="strand" evidence="8">
    <location>
        <begin position="779"/>
        <end position="789"/>
    </location>
</feature>
<feature type="helix" evidence="8">
    <location>
        <begin position="790"/>
        <end position="792"/>
    </location>
</feature>
<feature type="strand" evidence="8">
    <location>
        <begin position="799"/>
        <end position="801"/>
    </location>
</feature>
<feature type="helix" evidence="8">
    <location>
        <begin position="802"/>
        <end position="810"/>
    </location>
</feature>
<feature type="turn" evidence="8">
    <location>
        <begin position="811"/>
        <end position="813"/>
    </location>
</feature>
<feature type="strand" evidence="8">
    <location>
        <begin position="814"/>
        <end position="820"/>
    </location>
</feature>
<feature type="strand" evidence="9">
    <location>
        <begin position="822"/>
        <end position="825"/>
    </location>
</feature>
<feature type="strand" evidence="8">
    <location>
        <begin position="828"/>
        <end position="830"/>
    </location>
</feature>
<feature type="strand" evidence="8">
    <location>
        <begin position="835"/>
        <end position="839"/>
    </location>
</feature>
<feature type="strand" evidence="8">
    <location>
        <begin position="845"/>
        <end position="851"/>
    </location>
</feature>
<keyword id="KW-0002">3D-structure</keyword>
<keyword id="KW-0175">Coiled coil</keyword>
<keyword id="KW-0407">Ion channel</keyword>
<keyword id="KW-0406">Ion transport</keyword>
<keyword id="KW-0472">Membrane</keyword>
<keyword id="KW-0539">Nucleus</keyword>
<keyword id="KW-0812">Transmembrane</keyword>
<keyword id="KW-1133">Transmembrane helix</keyword>
<keyword id="KW-0813">Transport</keyword>